<sequence length="196" mass="21704">MNVVILDTGCANLSSVKSAVARHGYTPVVSREAEIVLRADKLFLPGVGTAQAAMDQLRERELIDLIKACTQPVLGICLGMQLLGRRSEETRGVDLLNIIEQDVPKMTDFGLPLPHMGWNRVYPQAGNRLFQGIEDGAYFYFVHSYAMPVNPWTIAQCNYGEPFTAAVQKDNFFGVQFHPERSGAAGAQLLKNFLEM</sequence>
<name>HIS5_SALTI</name>
<evidence type="ECO:0000250" key="1"/>
<dbReference type="EC" id="4.3.2.10"/>
<dbReference type="EC" id="3.5.1.2"/>
<dbReference type="EMBL" id="AL513382">
    <property type="protein sequence ID" value="CAD02437.1"/>
    <property type="molecule type" value="Genomic_DNA"/>
</dbReference>
<dbReference type="EMBL" id="AE014613">
    <property type="protein sequence ID" value="AAO68489.1"/>
    <property type="molecule type" value="Genomic_DNA"/>
</dbReference>
<dbReference type="RefSeq" id="NP_456623.1">
    <property type="nucleotide sequence ID" value="NC_003198.1"/>
</dbReference>
<dbReference type="RefSeq" id="WP_001103591.1">
    <property type="nucleotide sequence ID" value="NZ_WSUR01000002.1"/>
</dbReference>
<dbReference type="SMR" id="P0A1R5"/>
<dbReference type="STRING" id="220341.gene:17586192"/>
<dbReference type="KEGG" id="stt:t0798"/>
<dbReference type="KEGG" id="sty:STY2284"/>
<dbReference type="PATRIC" id="fig|220341.7.peg.2304"/>
<dbReference type="eggNOG" id="COG0118">
    <property type="taxonomic scope" value="Bacteria"/>
</dbReference>
<dbReference type="HOGENOM" id="CLU_071837_0_0_6"/>
<dbReference type="OMA" id="WVYFVHS"/>
<dbReference type="OrthoDB" id="9807137at2"/>
<dbReference type="UniPathway" id="UPA00031">
    <property type="reaction ID" value="UER00010"/>
</dbReference>
<dbReference type="Proteomes" id="UP000000541">
    <property type="component" value="Chromosome"/>
</dbReference>
<dbReference type="Proteomes" id="UP000002670">
    <property type="component" value="Chromosome"/>
</dbReference>
<dbReference type="GO" id="GO:0005737">
    <property type="term" value="C:cytoplasm"/>
    <property type="evidence" value="ECO:0007669"/>
    <property type="project" value="UniProtKB-SubCell"/>
</dbReference>
<dbReference type="GO" id="GO:0004359">
    <property type="term" value="F:glutaminase activity"/>
    <property type="evidence" value="ECO:0007669"/>
    <property type="project" value="UniProtKB-EC"/>
</dbReference>
<dbReference type="GO" id="GO:0000107">
    <property type="term" value="F:imidazoleglycerol-phosphate synthase activity"/>
    <property type="evidence" value="ECO:0007669"/>
    <property type="project" value="UniProtKB-UniRule"/>
</dbReference>
<dbReference type="GO" id="GO:0016829">
    <property type="term" value="F:lyase activity"/>
    <property type="evidence" value="ECO:0007669"/>
    <property type="project" value="UniProtKB-KW"/>
</dbReference>
<dbReference type="GO" id="GO:0000105">
    <property type="term" value="P:L-histidine biosynthetic process"/>
    <property type="evidence" value="ECO:0007669"/>
    <property type="project" value="UniProtKB-UniRule"/>
</dbReference>
<dbReference type="CDD" id="cd01748">
    <property type="entry name" value="GATase1_IGP_Synthase"/>
    <property type="match status" value="1"/>
</dbReference>
<dbReference type="FunFam" id="3.40.50.880:FF:000009">
    <property type="entry name" value="Imidazole glycerol phosphate synthase subunit HisH"/>
    <property type="match status" value="1"/>
</dbReference>
<dbReference type="Gene3D" id="3.40.50.880">
    <property type="match status" value="1"/>
</dbReference>
<dbReference type="HAMAP" id="MF_00278">
    <property type="entry name" value="HisH"/>
    <property type="match status" value="1"/>
</dbReference>
<dbReference type="InterPro" id="IPR029062">
    <property type="entry name" value="Class_I_gatase-like"/>
</dbReference>
<dbReference type="InterPro" id="IPR017926">
    <property type="entry name" value="GATASE"/>
</dbReference>
<dbReference type="InterPro" id="IPR010139">
    <property type="entry name" value="Imidazole-glycPsynth_HisH"/>
</dbReference>
<dbReference type="NCBIfam" id="TIGR01855">
    <property type="entry name" value="IMP_synth_hisH"/>
    <property type="match status" value="1"/>
</dbReference>
<dbReference type="PANTHER" id="PTHR42701">
    <property type="entry name" value="IMIDAZOLE GLYCEROL PHOSPHATE SYNTHASE SUBUNIT HISH"/>
    <property type="match status" value="1"/>
</dbReference>
<dbReference type="PANTHER" id="PTHR42701:SF1">
    <property type="entry name" value="IMIDAZOLE GLYCEROL PHOSPHATE SYNTHASE SUBUNIT HISH"/>
    <property type="match status" value="1"/>
</dbReference>
<dbReference type="Pfam" id="PF00117">
    <property type="entry name" value="GATase"/>
    <property type="match status" value="1"/>
</dbReference>
<dbReference type="PIRSF" id="PIRSF000495">
    <property type="entry name" value="Amidotransf_hisH"/>
    <property type="match status" value="1"/>
</dbReference>
<dbReference type="PRINTS" id="PR00096">
    <property type="entry name" value="GATASE"/>
</dbReference>
<dbReference type="SUPFAM" id="SSF52317">
    <property type="entry name" value="Class I glutamine amidotransferase-like"/>
    <property type="match status" value="1"/>
</dbReference>
<dbReference type="PROSITE" id="PS51273">
    <property type="entry name" value="GATASE_TYPE_1"/>
    <property type="match status" value="1"/>
</dbReference>
<protein>
    <recommendedName>
        <fullName>Imidazole glycerol phosphate synthase subunit HisH</fullName>
        <ecNumber>4.3.2.10</ecNumber>
    </recommendedName>
    <alternativeName>
        <fullName>IGP synthase glutaminase subunit</fullName>
        <ecNumber>3.5.1.2</ecNumber>
    </alternativeName>
    <alternativeName>
        <fullName>IGP synthase subunit HisH</fullName>
    </alternativeName>
    <alternativeName>
        <fullName>ImGP synthase subunit HisH</fullName>
        <shortName>IGPS subunit HisH</shortName>
    </alternativeName>
</protein>
<keyword id="KW-0028">Amino-acid biosynthesis</keyword>
<keyword id="KW-0963">Cytoplasm</keyword>
<keyword id="KW-0315">Glutamine amidotransferase</keyword>
<keyword id="KW-0368">Histidine biosynthesis</keyword>
<keyword id="KW-0378">Hydrolase</keyword>
<keyword id="KW-0456">Lyase</keyword>
<reference key="1">
    <citation type="journal article" date="2001" name="Nature">
        <title>Complete genome sequence of a multiple drug resistant Salmonella enterica serovar Typhi CT18.</title>
        <authorList>
            <person name="Parkhill J."/>
            <person name="Dougan G."/>
            <person name="James K.D."/>
            <person name="Thomson N.R."/>
            <person name="Pickard D."/>
            <person name="Wain J."/>
            <person name="Churcher C.M."/>
            <person name="Mungall K.L."/>
            <person name="Bentley S.D."/>
            <person name="Holden M.T.G."/>
            <person name="Sebaihia M."/>
            <person name="Baker S."/>
            <person name="Basham D."/>
            <person name="Brooks K."/>
            <person name="Chillingworth T."/>
            <person name="Connerton P."/>
            <person name="Cronin A."/>
            <person name="Davis P."/>
            <person name="Davies R.M."/>
            <person name="Dowd L."/>
            <person name="White N."/>
            <person name="Farrar J."/>
            <person name="Feltwell T."/>
            <person name="Hamlin N."/>
            <person name="Haque A."/>
            <person name="Hien T.T."/>
            <person name="Holroyd S."/>
            <person name="Jagels K."/>
            <person name="Krogh A."/>
            <person name="Larsen T.S."/>
            <person name="Leather S."/>
            <person name="Moule S."/>
            <person name="O'Gaora P."/>
            <person name="Parry C."/>
            <person name="Quail M.A."/>
            <person name="Rutherford K.M."/>
            <person name="Simmonds M."/>
            <person name="Skelton J."/>
            <person name="Stevens K."/>
            <person name="Whitehead S."/>
            <person name="Barrell B.G."/>
        </authorList>
    </citation>
    <scope>NUCLEOTIDE SEQUENCE [LARGE SCALE GENOMIC DNA]</scope>
    <source>
        <strain>CT18</strain>
    </source>
</reference>
<reference key="2">
    <citation type="journal article" date="2003" name="J. Bacteriol.">
        <title>Comparative genomics of Salmonella enterica serovar Typhi strains Ty2 and CT18.</title>
        <authorList>
            <person name="Deng W."/>
            <person name="Liou S.-R."/>
            <person name="Plunkett G. III"/>
            <person name="Mayhew G.F."/>
            <person name="Rose D.J."/>
            <person name="Burland V."/>
            <person name="Kodoyianni V."/>
            <person name="Schwartz D.C."/>
            <person name="Blattner F.R."/>
        </authorList>
    </citation>
    <scope>NUCLEOTIDE SEQUENCE [LARGE SCALE GENOMIC DNA]</scope>
    <source>
        <strain>ATCC 700931 / Ty2</strain>
    </source>
</reference>
<proteinExistence type="inferred from homology"/>
<gene>
    <name type="primary">hisH</name>
    <name type="ordered locus">STY2284</name>
    <name type="ordered locus">t0798</name>
</gene>
<feature type="chain" id="PRO_0000152418" description="Imidazole glycerol phosphate synthase subunit HisH">
    <location>
        <begin position="1"/>
        <end position="196"/>
    </location>
</feature>
<feature type="domain" description="Glutamine amidotransferase type-1">
    <location>
        <begin position="2"/>
        <end position="196"/>
    </location>
</feature>
<feature type="active site" description="Nucleophile" evidence="1">
    <location>
        <position position="77"/>
    </location>
</feature>
<feature type="active site" evidence="1">
    <location>
        <position position="178"/>
    </location>
</feature>
<feature type="active site" evidence="1">
    <location>
        <position position="180"/>
    </location>
</feature>
<comment type="function">
    <text evidence="1">IGPS catalyzes the conversion of PRFAR and glutamine to IGP, AICAR and glutamate. The HisH subunit catalyzes the hydrolysis of glutamine to glutamate and ammonia as part of the synthesis of IGP and AICAR. The resulting ammonia molecule is channeled to the active site of HisF (By similarity).</text>
</comment>
<comment type="catalytic activity">
    <reaction>
        <text>5-[(5-phospho-1-deoxy-D-ribulos-1-ylimino)methylamino]-1-(5-phospho-beta-D-ribosyl)imidazole-4-carboxamide + L-glutamine = D-erythro-1-(imidazol-4-yl)glycerol 3-phosphate + 5-amino-1-(5-phospho-beta-D-ribosyl)imidazole-4-carboxamide + L-glutamate + H(+)</text>
        <dbReference type="Rhea" id="RHEA:24793"/>
        <dbReference type="ChEBI" id="CHEBI:15378"/>
        <dbReference type="ChEBI" id="CHEBI:29985"/>
        <dbReference type="ChEBI" id="CHEBI:58278"/>
        <dbReference type="ChEBI" id="CHEBI:58359"/>
        <dbReference type="ChEBI" id="CHEBI:58475"/>
        <dbReference type="ChEBI" id="CHEBI:58525"/>
        <dbReference type="EC" id="4.3.2.10"/>
    </reaction>
</comment>
<comment type="catalytic activity">
    <reaction>
        <text>L-glutamine + H2O = L-glutamate + NH4(+)</text>
        <dbReference type="Rhea" id="RHEA:15889"/>
        <dbReference type="ChEBI" id="CHEBI:15377"/>
        <dbReference type="ChEBI" id="CHEBI:28938"/>
        <dbReference type="ChEBI" id="CHEBI:29985"/>
        <dbReference type="ChEBI" id="CHEBI:58359"/>
        <dbReference type="EC" id="3.5.1.2"/>
    </reaction>
</comment>
<comment type="pathway">
    <text>Amino-acid biosynthesis; L-histidine biosynthesis; L-histidine from 5-phospho-alpha-D-ribose 1-diphosphate: step 5/9.</text>
</comment>
<comment type="subunit">
    <text evidence="1">Heterodimer of HisH and HisF.</text>
</comment>
<comment type="subcellular location">
    <subcellularLocation>
        <location evidence="1">Cytoplasm</location>
    </subcellularLocation>
</comment>
<organism>
    <name type="scientific">Salmonella typhi</name>
    <dbReference type="NCBI Taxonomy" id="90370"/>
    <lineage>
        <taxon>Bacteria</taxon>
        <taxon>Pseudomonadati</taxon>
        <taxon>Pseudomonadota</taxon>
        <taxon>Gammaproteobacteria</taxon>
        <taxon>Enterobacterales</taxon>
        <taxon>Enterobacteriaceae</taxon>
        <taxon>Salmonella</taxon>
    </lineage>
</organism>
<accession>P0A1R5</accession>
<accession>P10376</accession>